<keyword id="KW-0460">Magnesium</keyword>
<keyword id="KW-1185">Reference proteome</keyword>
<keyword id="KW-0808">Transferase</keyword>
<comment type="function">
    <text evidence="1">Catalyzes the transfer of the phosphoenolpyruvate moiety from enoylpyruvoyl-2-diphospho-5'-guanosine (EPPG) to 7,8-didemethyl-8-hydroxy-5-deazariboflavin (FO) with the formation of dehydro coenzyme F420-0 and GMP.</text>
</comment>
<comment type="catalytic activity">
    <reaction evidence="1">
        <text>enolpyruvoyl-2-diphospho-5'-guanosine + 7,8-didemethyl-8-hydroxy-5-deazariboflavin = dehydro coenzyme F420-0 + GMP + H(+)</text>
        <dbReference type="Rhea" id="RHEA:27510"/>
        <dbReference type="ChEBI" id="CHEBI:15378"/>
        <dbReference type="ChEBI" id="CHEBI:58115"/>
        <dbReference type="ChEBI" id="CHEBI:59904"/>
        <dbReference type="ChEBI" id="CHEBI:143701"/>
        <dbReference type="ChEBI" id="CHEBI:143705"/>
        <dbReference type="EC" id="2.7.8.28"/>
    </reaction>
</comment>
<comment type="cofactor">
    <cofactor evidence="1">
        <name>Mg(2+)</name>
        <dbReference type="ChEBI" id="CHEBI:18420"/>
    </cofactor>
</comment>
<comment type="pathway">
    <text evidence="1">Cofactor biosynthesis; coenzyme F420 biosynthesis.</text>
</comment>
<comment type="subunit">
    <text evidence="1">Homodimer.</text>
</comment>
<comment type="similarity">
    <text evidence="1">Belongs to the CofD family.</text>
</comment>
<gene>
    <name evidence="1" type="primary">fbiA</name>
    <name type="ordered locus">MRA_3302</name>
</gene>
<protein>
    <recommendedName>
        <fullName evidence="1">Phosphoenolpyruvate transferase</fullName>
        <ecNumber evidence="1">2.7.8.28</ecNumber>
    </recommendedName>
    <alternativeName>
        <fullName evidence="1">EPPG:FO PEP transferase</fullName>
    </alternativeName>
</protein>
<reference key="1">
    <citation type="journal article" date="2008" name="PLoS ONE">
        <title>Genetic basis of virulence attenuation revealed by comparative genomic analysis of Mycobacterium tuberculosis strain H37Ra versus H37Rv.</title>
        <authorList>
            <person name="Zheng H."/>
            <person name="Lu L."/>
            <person name="Wang B."/>
            <person name="Pu S."/>
            <person name="Zhang X."/>
            <person name="Zhu G."/>
            <person name="Shi W."/>
            <person name="Zhang L."/>
            <person name="Wang H."/>
            <person name="Wang S."/>
            <person name="Zhao G."/>
            <person name="Zhang Y."/>
        </authorList>
    </citation>
    <scope>NUCLEOTIDE SEQUENCE [LARGE SCALE GENOMIC DNA]</scope>
    <source>
        <strain>ATCC 25177 / H37Ra</strain>
    </source>
</reference>
<sequence length="331" mass="35335">MKVTVLAGGVGGARFLLGVQQLLGLGQFAANSAHSDADHQLSAVVNVGDDAWIHGLRVCPDLDTCMYTLGGGVDPQRGWGQRDETWHAMQELVRYGVQPDWFELGDRDLATHLVRTQMLQAGYPLSQITEALCDRWQPGARLLPATDDRCETHVVITDPVDESRKAIHFQEWWVRYRAQVPTHSFAFVGAEKSSAATEAIAALADADIIMLAPSNPVVSIGAILAVPGIRAALREATAPIVGYSPIIGEKPLRGMADTCLSVIGVDSTAAAVGRHYGARCATGILDCWLVHDGDHAEIDGVTVRSVPLLMTDPNATAEMVRAGCDLAGVVA</sequence>
<name>FBIA_MYCTA</name>
<accession>A5U7T5</accession>
<proteinExistence type="inferred from homology"/>
<organism>
    <name type="scientific">Mycobacterium tuberculosis (strain ATCC 25177 / H37Ra)</name>
    <dbReference type="NCBI Taxonomy" id="419947"/>
    <lineage>
        <taxon>Bacteria</taxon>
        <taxon>Bacillati</taxon>
        <taxon>Actinomycetota</taxon>
        <taxon>Actinomycetes</taxon>
        <taxon>Mycobacteriales</taxon>
        <taxon>Mycobacteriaceae</taxon>
        <taxon>Mycobacterium</taxon>
        <taxon>Mycobacterium tuberculosis complex</taxon>
    </lineage>
</organism>
<evidence type="ECO:0000255" key="1">
    <source>
        <dbReference type="HAMAP-Rule" id="MF_01257"/>
    </source>
</evidence>
<dbReference type="EC" id="2.7.8.28" evidence="1"/>
<dbReference type="EMBL" id="CP000611">
    <property type="protein sequence ID" value="ABQ75085.1"/>
    <property type="molecule type" value="Genomic_DNA"/>
</dbReference>
<dbReference type="SMR" id="A5U7T5"/>
<dbReference type="KEGG" id="mra:MRA_3302"/>
<dbReference type="eggNOG" id="COG0391">
    <property type="taxonomic scope" value="Bacteria"/>
</dbReference>
<dbReference type="HOGENOM" id="CLU_055795_0_0_11"/>
<dbReference type="UniPathway" id="UPA00071"/>
<dbReference type="Proteomes" id="UP000001988">
    <property type="component" value="Chromosome"/>
</dbReference>
<dbReference type="GO" id="GO:0043743">
    <property type="term" value="F:LPPG:FO 2-phospho-L-lactate transferase activity"/>
    <property type="evidence" value="ECO:0007669"/>
    <property type="project" value="UniProtKB-EC"/>
</dbReference>
<dbReference type="GO" id="GO:0000287">
    <property type="term" value="F:magnesium ion binding"/>
    <property type="evidence" value="ECO:0007669"/>
    <property type="project" value="InterPro"/>
</dbReference>
<dbReference type="GO" id="GO:0052645">
    <property type="term" value="P:F420-0 metabolic process"/>
    <property type="evidence" value="ECO:0007669"/>
    <property type="project" value="UniProtKB-UniRule"/>
</dbReference>
<dbReference type="CDD" id="cd07186">
    <property type="entry name" value="CofD_like"/>
    <property type="match status" value="1"/>
</dbReference>
<dbReference type="FunFam" id="1.10.8.240:FF:000001">
    <property type="entry name" value="2-phospho-L-lactate transferase"/>
    <property type="match status" value="1"/>
</dbReference>
<dbReference type="FunFam" id="3.40.50.10680:FF:000001">
    <property type="entry name" value="2-phospho-L-lactate transferase"/>
    <property type="match status" value="1"/>
</dbReference>
<dbReference type="Gene3D" id="1.10.8.240">
    <property type="entry name" value="CofD-like domain"/>
    <property type="match status" value="1"/>
</dbReference>
<dbReference type="Gene3D" id="3.40.50.10680">
    <property type="entry name" value="CofD-like domains"/>
    <property type="match status" value="1"/>
</dbReference>
<dbReference type="HAMAP" id="MF_01257">
    <property type="entry name" value="CofD"/>
    <property type="match status" value="1"/>
</dbReference>
<dbReference type="InterPro" id="IPR002882">
    <property type="entry name" value="CofD"/>
</dbReference>
<dbReference type="InterPro" id="IPR038136">
    <property type="entry name" value="CofD-like_dom_sf"/>
</dbReference>
<dbReference type="InterPro" id="IPR010115">
    <property type="entry name" value="FbiA/CofD"/>
</dbReference>
<dbReference type="NCBIfam" id="TIGR01819">
    <property type="entry name" value="F420_cofD"/>
    <property type="match status" value="1"/>
</dbReference>
<dbReference type="PANTHER" id="PTHR43007">
    <property type="entry name" value="2-PHOSPHO-L-LACTATE TRANSFERASE"/>
    <property type="match status" value="1"/>
</dbReference>
<dbReference type="PANTHER" id="PTHR43007:SF1">
    <property type="entry name" value="2-PHOSPHO-L-LACTATE TRANSFERASE"/>
    <property type="match status" value="1"/>
</dbReference>
<dbReference type="Pfam" id="PF01933">
    <property type="entry name" value="CofD"/>
    <property type="match status" value="1"/>
</dbReference>
<dbReference type="SUPFAM" id="SSF142338">
    <property type="entry name" value="CofD-like"/>
    <property type="match status" value="1"/>
</dbReference>
<feature type="chain" id="PRO_1000067255" description="Phosphoenolpyruvate transferase">
    <location>
        <begin position="1"/>
        <end position="331"/>
    </location>
</feature>
<feature type="binding site" evidence="1">
    <location>
        <position position="63"/>
    </location>
    <ligand>
        <name>7,8-didemethyl-8-hydroxy-5-deazariboflavin</name>
        <dbReference type="ChEBI" id="CHEBI:59904"/>
    </ligand>
</feature>